<keyword id="KW-1185">Reference proteome</keyword>
<keyword id="KW-0677">Repeat</keyword>
<keyword id="KW-0802">TPR repeat</keyword>
<sequence length="179" mass="19648">MSTSHDRAVLNQILNPLMPTSDSGIAEIHLESDSLEHPGYELSLQLEREGVALAEGVRLDEAIEKFTKALEVCPKNPSAYNNRAQAYRLQNKPEKALDDLNEALSLAGPKTKTACQAYVQRASIYRLRGDDDKARTDFASAAELGSSFAKMQLVALNPYAAMCNKMLAEVFEKAKTGED</sequence>
<protein>
    <recommendedName>
        <fullName evidence="1">Tetratricopeptide repeat protein 36</fullName>
        <shortName evidence="1">TPR repeat protein 36</shortName>
    </recommendedName>
</protein>
<proteinExistence type="inferred from homology"/>
<name>TTC36_CAEEL</name>
<dbReference type="EMBL" id="Z66512">
    <property type="protein sequence ID" value="CAA91325.1"/>
    <property type="molecule type" value="Genomic_DNA"/>
</dbReference>
<dbReference type="PIR" id="T22521">
    <property type="entry name" value="T22521"/>
</dbReference>
<dbReference type="RefSeq" id="NP_496168.1">
    <property type="nucleotide sequence ID" value="NM_063767.4"/>
</dbReference>
<dbReference type="SMR" id="Q20683"/>
<dbReference type="BioGRID" id="39882">
    <property type="interactions" value="7"/>
</dbReference>
<dbReference type="FunCoup" id="Q20683">
    <property type="interactions" value="36"/>
</dbReference>
<dbReference type="STRING" id="6239.F52H3.5.1"/>
<dbReference type="PaxDb" id="6239-F52H3.5"/>
<dbReference type="PeptideAtlas" id="Q20683"/>
<dbReference type="EnsemblMetazoa" id="F52H3.5.1">
    <property type="protein sequence ID" value="F52H3.5.1"/>
    <property type="gene ID" value="WBGene00009947"/>
</dbReference>
<dbReference type="GeneID" id="174562"/>
<dbReference type="KEGG" id="cel:CELE_F52H3.5"/>
<dbReference type="UCSC" id="F52H3.5">
    <property type="organism name" value="c. elegans"/>
</dbReference>
<dbReference type="AGR" id="WB:WBGene00009947"/>
<dbReference type="CTD" id="174562"/>
<dbReference type="WormBase" id="F52H3.5">
    <property type="protein sequence ID" value="CE03401"/>
    <property type="gene ID" value="WBGene00009947"/>
    <property type="gene designation" value="ttc-36"/>
</dbReference>
<dbReference type="eggNOG" id="KOG4555">
    <property type="taxonomic scope" value="Eukaryota"/>
</dbReference>
<dbReference type="GeneTree" id="ENSGT00390000007968"/>
<dbReference type="HOGENOM" id="CLU_1464567_0_0_1"/>
<dbReference type="InParanoid" id="Q20683"/>
<dbReference type="OMA" id="CNQMLCE"/>
<dbReference type="OrthoDB" id="539634at2759"/>
<dbReference type="PhylomeDB" id="Q20683"/>
<dbReference type="PRO" id="PR:Q20683"/>
<dbReference type="Proteomes" id="UP000001940">
    <property type="component" value="Chromosome II"/>
</dbReference>
<dbReference type="Bgee" id="WBGene00009947">
    <property type="expression patterns" value="Expressed in larva and 3 other cell types or tissues"/>
</dbReference>
<dbReference type="GO" id="GO:0006570">
    <property type="term" value="P:tyrosine metabolic process"/>
    <property type="evidence" value="ECO:0000318"/>
    <property type="project" value="GO_Central"/>
</dbReference>
<dbReference type="FunFam" id="1.25.40.10:FF:000213">
    <property type="entry name" value="Tetratricopeptide repeat domain 36"/>
    <property type="match status" value="1"/>
</dbReference>
<dbReference type="Gene3D" id="1.25.40.10">
    <property type="entry name" value="Tetratricopeptide repeat domain"/>
    <property type="match status" value="1"/>
</dbReference>
<dbReference type="InterPro" id="IPR011990">
    <property type="entry name" value="TPR-like_helical_dom_sf"/>
</dbReference>
<dbReference type="InterPro" id="IPR019734">
    <property type="entry name" value="TPR_rpt"/>
</dbReference>
<dbReference type="InterPro" id="IPR038906">
    <property type="entry name" value="TTC36"/>
</dbReference>
<dbReference type="PANTHER" id="PTHR21405">
    <property type="entry name" value="CDNA SEQUENCE BC021608"/>
    <property type="match status" value="1"/>
</dbReference>
<dbReference type="PANTHER" id="PTHR21405:SF0">
    <property type="entry name" value="TETRATRICOPEPTIDE REPEAT PROTEIN 36"/>
    <property type="match status" value="1"/>
</dbReference>
<dbReference type="Pfam" id="PF13414">
    <property type="entry name" value="TPR_11"/>
    <property type="match status" value="1"/>
</dbReference>
<dbReference type="SMART" id="SM00028">
    <property type="entry name" value="TPR"/>
    <property type="match status" value="3"/>
</dbReference>
<dbReference type="SUPFAM" id="SSF48452">
    <property type="entry name" value="TPR-like"/>
    <property type="match status" value="1"/>
</dbReference>
<dbReference type="PROSITE" id="PS50005">
    <property type="entry name" value="TPR"/>
    <property type="match status" value="3"/>
</dbReference>
<dbReference type="PROSITE" id="PS50293">
    <property type="entry name" value="TPR_REGION"/>
    <property type="match status" value="1"/>
</dbReference>
<accession>Q20683</accession>
<comment type="similarity">
    <text evidence="1">Belongs to the TTC36 family.</text>
</comment>
<evidence type="ECO:0000305" key="1"/>
<evidence type="ECO:0000312" key="2">
    <source>
        <dbReference type="WormBase" id="F52H3.5"/>
    </source>
</evidence>
<gene>
    <name evidence="2" type="primary">ttc-36</name>
    <name evidence="2" type="ORF">F52H3.5</name>
</gene>
<organism>
    <name type="scientific">Caenorhabditis elegans</name>
    <dbReference type="NCBI Taxonomy" id="6239"/>
    <lineage>
        <taxon>Eukaryota</taxon>
        <taxon>Metazoa</taxon>
        <taxon>Ecdysozoa</taxon>
        <taxon>Nematoda</taxon>
        <taxon>Chromadorea</taxon>
        <taxon>Rhabditida</taxon>
        <taxon>Rhabditina</taxon>
        <taxon>Rhabditomorpha</taxon>
        <taxon>Rhabditoidea</taxon>
        <taxon>Rhabditidae</taxon>
        <taxon>Peloderinae</taxon>
        <taxon>Caenorhabditis</taxon>
    </lineage>
</organism>
<feature type="chain" id="PRO_0000332186" description="Tetratricopeptide repeat protein 36">
    <location>
        <begin position="1"/>
        <end position="179"/>
    </location>
</feature>
<feature type="repeat" description="TPR 1">
    <location>
        <begin position="43"/>
        <end position="76"/>
    </location>
</feature>
<feature type="repeat" description="TPR 2">
    <location>
        <begin position="78"/>
        <end position="110"/>
    </location>
</feature>
<feature type="repeat" description="TPR 3">
    <location>
        <begin position="115"/>
        <end position="148"/>
    </location>
</feature>
<reference key="1">
    <citation type="journal article" date="1998" name="Science">
        <title>Genome sequence of the nematode C. elegans: a platform for investigating biology.</title>
        <authorList>
            <consortium name="The C. elegans sequencing consortium"/>
        </authorList>
    </citation>
    <scope>NUCLEOTIDE SEQUENCE [LARGE SCALE GENOMIC DNA]</scope>
    <source>
        <strain>Bristol N2</strain>
    </source>
</reference>